<evidence type="ECO:0000255" key="1">
    <source>
        <dbReference type="HAMAP-Rule" id="MF_00514"/>
    </source>
</evidence>
<evidence type="ECO:0000256" key="2">
    <source>
        <dbReference type="SAM" id="MobiDB-lite"/>
    </source>
</evidence>
<evidence type="ECO:0000305" key="3"/>
<organism>
    <name type="scientific">Pelotomaculum thermopropionicum (strain DSM 13744 / JCM 10971 / SI)</name>
    <dbReference type="NCBI Taxonomy" id="370438"/>
    <lineage>
        <taxon>Bacteria</taxon>
        <taxon>Bacillati</taxon>
        <taxon>Bacillota</taxon>
        <taxon>Clostridia</taxon>
        <taxon>Eubacteriales</taxon>
        <taxon>Desulfotomaculaceae</taxon>
        <taxon>Pelotomaculum</taxon>
    </lineage>
</organism>
<gene>
    <name evidence="1" type="primary">rpmI</name>
    <name type="ordered locus">PTH_1954</name>
</gene>
<name>RL35_PELTS</name>
<keyword id="KW-1185">Reference proteome</keyword>
<keyword id="KW-0687">Ribonucleoprotein</keyword>
<keyword id="KW-0689">Ribosomal protein</keyword>
<feature type="chain" id="PRO_1000081617" description="Large ribosomal subunit protein bL35">
    <location>
        <begin position="1"/>
        <end position="63"/>
    </location>
</feature>
<feature type="region of interest" description="Disordered" evidence="2">
    <location>
        <begin position="1"/>
        <end position="26"/>
    </location>
</feature>
<feature type="compositionally biased region" description="Basic residues" evidence="2">
    <location>
        <begin position="1"/>
        <end position="15"/>
    </location>
</feature>
<sequence length="63" mass="7201">MPKIKTHRGAAKRFKQTAGGKWKGSHAFHSHILGKKTAKRKRNLRKVTVISMADARRLKRLLP</sequence>
<accession>A5D0U5</accession>
<dbReference type="EMBL" id="AP009389">
    <property type="protein sequence ID" value="BAF60135.1"/>
    <property type="molecule type" value="Genomic_DNA"/>
</dbReference>
<dbReference type="SMR" id="A5D0U5"/>
<dbReference type="STRING" id="370438.PTH_1954"/>
<dbReference type="KEGG" id="pth:PTH_1954"/>
<dbReference type="eggNOG" id="COG0291">
    <property type="taxonomic scope" value="Bacteria"/>
</dbReference>
<dbReference type="HOGENOM" id="CLU_169643_4_3_9"/>
<dbReference type="Proteomes" id="UP000006556">
    <property type="component" value="Chromosome"/>
</dbReference>
<dbReference type="GO" id="GO:0022625">
    <property type="term" value="C:cytosolic large ribosomal subunit"/>
    <property type="evidence" value="ECO:0007669"/>
    <property type="project" value="TreeGrafter"/>
</dbReference>
<dbReference type="GO" id="GO:0003735">
    <property type="term" value="F:structural constituent of ribosome"/>
    <property type="evidence" value="ECO:0007669"/>
    <property type="project" value="InterPro"/>
</dbReference>
<dbReference type="GO" id="GO:0006412">
    <property type="term" value="P:translation"/>
    <property type="evidence" value="ECO:0007669"/>
    <property type="project" value="UniProtKB-UniRule"/>
</dbReference>
<dbReference type="FunFam" id="4.10.410.60:FF:000001">
    <property type="entry name" value="50S ribosomal protein L35"/>
    <property type="match status" value="1"/>
</dbReference>
<dbReference type="Gene3D" id="4.10.410.60">
    <property type="match status" value="1"/>
</dbReference>
<dbReference type="HAMAP" id="MF_00514">
    <property type="entry name" value="Ribosomal_bL35"/>
    <property type="match status" value="1"/>
</dbReference>
<dbReference type="InterPro" id="IPR001706">
    <property type="entry name" value="Ribosomal_bL35"/>
</dbReference>
<dbReference type="InterPro" id="IPR021137">
    <property type="entry name" value="Ribosomal_bL35-like"/>
</dbReference>
<dbReference type="InterPro" id="IPR018265">
    <property type="entry name" value="Ribosomal_bL35_CS"/>
</dbReference>
<dbReference type="InterPro" id="IPR037229">
    <property type="entry name" value="Ribosomal_bL35_sf"/>
</dbReference>
<dbReference type="NCBIfam" id="TIGR00001">
    <property type="entry name" value="rpmI_bact"/>
    <property type="match status" value="1"/>
</dbReference>
<dbReference type="PANTHER" id="PTHR33343">
    <property type="entry name" value="54S RIBOSOMAL PROTEIN BL35M"/>
    <property type="match status" value="1"/>
</dbReference>
<dbReference type="PANTHER" id="PTHR33343:SF1">
    <property type="entry name" value="LARGE RIBOSOMAL SUBUNIT PROTEIN BL35M"/>
    <property type="match status" value="1"/>
</dbReference>
<dbReference type="Pfam" id="PF01632">
    <property type="entry name" value="Ribosomal_L35p"/>
    <property type="match status" value="1"/>
</dbReference>
<dbReference type="PRINTS" id="PR00064">
    <property type="entry name" value="RIBOSOMALL35"/>
</dbReference>
<dbReference type="SUPFAM" id="SSF143034">
    <property type="entry name" value="L35p-like"/>
    <property type="match status" value="1"/>
</dbReference>
<dbReference type="PROSITE" id="PS00936">
    <property type="entry name" value="RIBOSOMAL_L35"/>
    <property type="match status" value="1"/>
</dbReference>
<proteinExistence type="inferred from homology"/>
<protein>
    <recommendedName>
        <fullName evidence="1">Large ribosomal subunit protein bL35</fullName>
    </recommendedName>
    <alternativeName>
        <fullName evidence="3">50S ribosomal protein L35</fullName>
    </alternativeName>
</protein>
<comment type="similarity">
    <text evidence="1">Belongs to the bacterial ribosomal protein bL35 family.</text>
</comment>
<reference key="1">
    <citation type="journal article" date="2008" name="Genome Res.">
        <title>The genome of Pelotomaculum thermopropionicum reveals niche-associated evolution in anaerobic microbiota.</title>
        <authorList>
            <person name="Kosaka T."/>
            <person name="Kato S."/>
            <person name="Shimoyama T."/>
            <person name="Ishii S."/>
            <person name="Abe T."/>
            <person name="Watanabe K."/>
        </authorList>
    </citation>
    <scope>NUCLEOTIDE SEQUENCE [LARGE SCALE GENOMIC DNA]</scope>
    <source>
        <strain>DSM 13744 / JCM 10971 / SI</strain>
    </source>
</reference>